<feature type="chain" id="PRO_0000113657" description="Serine hydroxymethyltransferase 2">
    <location>
        <begin position="1"/>
        <end position="419"/>
    </location>
</feature>
<feature type="binding site" evidence="1">
    <location>
        <position position="120"/>
    </location>
    <ligand>
        <name>(6S)-5,6,7,8-tetrahydrofolate</name>
        <dbReference type="ChEBI" id="CHEBI:57453"/>
    </ligand>
</feature>
<feature type="binding site" evidence="1">
    <location>
        <begin position="124"/>
        <end position="126"/>
    </location>
    <ligand>
        <name>(6S)-5,6,7,8-tetrahydrofolate</name>
        <dbReference type="ChEBI" id="CHEBI:57453"/>
    </ligand>
</feature>
<feature type="site" description="Plays an important role in substrate specificity" evidence="1">
    <location>
        <position position="228"/>
    </location>
</feature>
<feature type="modified residue" description="N6-(pyridoxal phosphate)lysine" evidence="1">
    <location>
        <position position="229"/>
    </location>
</feature>
<gene>
    <name evidence="1" type="primary">glyA2</name>
    <name type="ordered locus">STY3764</name>
    <name type="ordered locus">t3514</name>
</gene>
<organism>
    <name type="scientific">Salmonella typhi</name>
    <dbReference type="NCBI Taxonomy" id="90370"/>
    <lineage>
        <taxon>Bacteria</taxon>
        <taxon>Pseudomonadati</taxon>
        <taxon>Pseudomonadota</taxon>
        <taxon>Gammaproteobacteria</taxon>
        <taxon>Enterobacterales</taxon>
        <taxon>Enterobacteriaceae</taxon>
        <taxon>Salmonella</taxon>
    </lineage>
</organism>
<protein>
    <recommendedName>
        <fullName evidence="1">Serine hydroxymethyltransferase 2</fullName>
        <shortName evidence="1">SHMT 2</shortName>
        <shortName evidence="1">Serine methylase 2</shortName>
        <ecNumber evidence="1">2.1.2.1</ecNumber>
    </recommendedName>
</protein>
<sequence length="419" mass="45558">MNFRGNRMINNDPLFDLLNKEQQRQQHSLELIASENFASPAVLAAQGSVLTNKYAEGYYQHRYYGGCKFIDEVEMLAITRAQQLFGARYVNVQPHSGSQANQAVYLALLKPGDKILGMSLQCGGHLTHGSPVNQSGKWFNAFHYGVDAHSGLIDMDEVETIAKRERPRLIIAGGSAYPRHYDFARFRRIADAVGAMLLVDMAHFAGLVAGGCFPSPLAYADVITATTHKTLRGPRGGMILTNDARLAKKIDSAIFPGLQGGPLMHVIAAKAVALGEALQPEFKRYAGQVIENAQAMCQQLAQRGLTLLTGGTDCHLGIIDLRPQGLTGAQVEYFLELAGITVNKNTLLGDPQPPSITSGIRIGSAACATRGMKADDFTLIADWISEIIFAIKTPNIADICADIRQKVTKLTTNYPLPYQ</sequence>
<dbReference type="EC" id="2.1.2.1" evidence="1"/>
<dbReference type="EMBL" id="AL513382">
    <property type="protein sequence ID" value="CAD09519.1"/>
    <property type="molecule type" value="Genomic_DNA"/>
</dbReference>
<dbReference type="EMBL" id="AE014613">
    <property type="protein sequence ID" value="AAO71022.1"/>
    <property type="molecule type" value="Genomic_DNA"/>
</dbReference>
<dbReference type="RefSeq" id="NP_457949.1">
    <property type="nucleotide sequence ID" value="NC_003198.1"/>
</dbReference>
<dbReference type="SMR" id="Q8Z2Z9"/>
<dbReference type="STRING" id="220341.gene:17587630"/>
<dbReference type="KEGG" id="stt:t3514"/>
<dbReference type="KEGG" id="sty:STY3764"/>
<dbReference type="PATRIC" id="fig|220341.7.peg.3839"/>
<dbReference type="eggNOG" id="COG0112">
    <property type="taxonomic scope" value="Bacteria"/>
</dbReference>
<dbReference type="HOGENOM" id="CLU_022477_2_1_6"/>
<dbReference type="OMA" id="CQFANVQ"/>
<dbReference type="OrthoDB" id="9803846at2"/>
<dbReference type="UniPathway" id="UPA00193"/>
<dbReference type="UniPathway" id="UPA00288">
    <property type="reaction ID" value="UER01023"/>
</dbReference>
<dbReference type="Proteomes" id="UP000000541">
    <property type="component" value="Chromosome"/>
</dbReference>
<dbReference type="Proteomes" id="UP000002670">
    <property type="component" value="Chromosome"/>
</dbReference>
<dbReference type="GO" id="GO:0005829">
    <property type="term" value="C:cytosol"/>
    <property type="evidence" value="ECO:0007669"/>
    <property type="project" value="TreeGrafter"/>
</dbReference>
<dbReference type="GO" id="GO:0004372">
    <property type="term" value="F:glycine hydroxymethyltransferase activity"/>
    <property type="evidence" value="ECO:0007669"/>
    <property type="project" value="UniProtKB-UniRule"/>
</dbReference>
<dbReference type="GO" id="GO:0030170">
    <property type="term" value="F:pyridoxal phosphate binding"/>
    <property type="evidence" value="ECO:0007669"/>
    <property type="project" value="UniProtKB-UniRule"/>
</dbReference>
<dbReference type="GO" id="GO:0019264">
    <property type="term" value="P:glycine biosynthetic process from serine"/>
    <property type="evidence" value="ECO:0007669"/>
    <property type="project" value="UniProtKB-UniRule"/>
</dbReference>
<dbReference type="GO" id="GO:0035999">
    <property type="term" value="P:tetrahydrofolate interconversion"/>
    <property type="evidence" value="ECO:0007669"/>
    <property type="project" value="UniProtKB-UniRule"/>
</dbReference>
<dbReference type="CDD" id="cd00378">
    <property type="entry name" value="SHMT"/>
    <property type="match status" value="1"/>
</dbReference>
<dbReference type="FunFam" id="3.40.640.10:FF:000001">
    <property type="entry name" value="Serine hydroxymethyltransferase"/>
    <property type="match status" value="1"/>
</dbReference>
<dbReference type="Gene3D" id="3.90.1150.10">
    <property type="entry name" value="Aspartate Aminotransferase, domain 1"/>
    <property type="match status" value="1"/>
</dbReference>
<dbReference type="Gene3D" id="3.40.640.10">
    <property type="entry name" value="Type I PLP-dependent aspartate aminotransferase-like (Major domain)"/>
    <property type="match status" value="1"/>
</dbReference>
<dbReference type="HAMAP" id="MF_00051">
    <property type="entry name" value="SHMT"/>
    <property type="match status" value="1"/>
</dbReference>
<dbReference type="InterPro" id="IPR015424">
    <property type="entry name" value="PyrdxlP-dep_Trfase"/>
</dbReference>
<dbReference type="InterPro" id="IPR015421">
    <property type="entry name" value="PyrdxlP-dep_Trfase_major"/>
</dbReference>
<dbReference type="InterPro" id="IPR015422">
    <property type="entry name" value="PyrdxlP-dep_Trfase_small"/>
</dbReference>
<dbReference type="InterPro" id="IPR001085">
    <property type="entry name" value="Ser_HO-MeTrfase"/>
</dbReference>
<dbReference type="InterPro" id="IPR049943">
    <property type="entry name" value="Ser_HO-MeTrfase-like"/>
</dbReference>
<dbReference type="InterPro" id="IPR019798">
    <property type="entry name" value="Ser_HO-MeTrfase_PLP_BS"/>
</dbReference>
<dbReference type="InterPro" id="IPR039429">
    <property type="entry name" value="SHMT-like_dom"/>
</dbReference>
<dbReference type="NCBIfam" id="NF000586">
    <property type="entry name" value="PRK00011.1"/>
    <property type="match status" value="1"/>
</dbReference>
<dbReference type="PANTHER" id="PTHR11680">
    <property type="entry name" value="SERINE HYDROXYMETHYLTRANSFERASE"/>
    <property type="match status" value="1"/>
</dbReference>
<dbReference type="PANTHER" id="PTHR11680:SF35">
    <property type="entry name" value="SERINE HYDROXYMETHYLTRANSFERASE 1"/>
    <property type="match status" value="1"/>
</dbReference>
<dbReference type="Pfam" id="PF00464">
    <property type="entry name" value="SHMT"/>
    <property type="match status" value="1"/>
</dbReference>
<dbReference type="PIRSF" id="PIRSF000412">
    <property type="entry name" value="SHMT"/>
    <property type="match status" value="1"/>
</dbReference>
<dbReference type="SUPFAM" id="SSF53383">
    <property type="entry name" value="PLP-dependent transferases"/>
    <property type="match status" value="1"/>
</dbReference>
<dbReference type="PROSITE" id="PS00096">
    <property type="entry name" value="SHMT"/>
    <property type="match status" value="1"/>
</dbReference>
<evidence type="ECO:0000255" key="1">
    <source>
        <dbReference type="HAMAP-Rule" id="MF_00051"/>
    </source>
</evidence>
<proteinExistence type="inferred from homology"/>
<reference key="1">
    <citation type="journal article" date="2001" name="Nature">
        <title>Complete genome sequence of a multiple drug resistant Salmonella enterica serovar Typhi CT18.</title>
        <authorList>
            <person name="Parkhill J."/>
            <person name="Dougan G."/>
            <person name="James K.D."/>
            <person name="Thomson N.R."/>
            <person name="Pickard D."/>
            <person name="Wain J."/>
            <person name="Churcher C.M."/>
            <person name="Mungall K.L."/>
            <person name="Bentley S.D."/>
            <person name="Holden M.T.G."/>
            <person name="Sebaihia M."/>
            <person name="Baker S."/>
            <person name="Basham D."/>
            <person name="Brooks K."/>
            <person name="Chillingworth T."/>
            <person name="Connerton P."/>
            <person name="Cronin A."/>
            <person name="Davis P."/>
            <person name="Davies R.M."/>
            <person name="Dowd L."/>
            <person name="White N."/>
            <person name="Farrar J."/>
            <person name="Feltwell T."/>
            <person name="Hamlin N."/>
            <person name="Haque A."/>
            <person name="Hien T.T."/>
            <person name="Holroyd S."/>
            <person name="Jagels K."/>
            <person name="Krogh A."/>
            <person name="Larsen T.S."/>
            <person name="Leather S."/>
            <person name="Moule S."/>
            <person name="O'Gaora P."/>
            <person name="Parry C."/>
            <person name="Quail M.A."/>
            <person name="Rutherford K.M."/>
            <person name="Simmonds M."/>
            <person name="Skelton J."/>
            <person name="Stevens K."/>
            <person name="Whitehead S."/>
            <person name="Barrell B.G."/>
        </authorList>
    </citation>
    <scope>NUCLEOTIDE SEQUENCE [LARGE SCALE GENOMIC DNA]</scope>
    <source>
        <strain>CT18</strain>
    </source>
</reference>
<reference key="2">
    <citation type="journal article" date="2003" name="J. Bacteriol.">
        <title>Comparative genomics of Salmonella enterica serovar Typhi strains Ty2 and CT18.</title>
        <authorList>
            <person name="Deng W."/>
            <person name="Liou S.-R."/>
            <person name="Plunkett G. III"/>
            <person name="Mayhew G.F."/>
            <person name="Rose D.J."/>
            <person name="Burland V."/>
            <person name="Kodoyianni V."/>
            <person name="Schwartz D.C."/>
            <person name="Blattner F.R."/>
        </authorList>
    </citation>
    <scope>NUCLEOTIDE SEQUENCE [LARGE SCALE GENOMIC DNA]</scope>
    <source>
        <strain>ATCC 700931 / Ty2</strain>
    </source>
</reference>
<comment type="function">
    <text evidence="1">Catalyzes the reversible interconversion of serine and glycine with tetrahydrofolate (THF) serving as the one-carbon carrier. This reaction serves as the major source of one-carbon groups required for the biosynthesis of purines, thymidylate, methionine, and other important biomolecules. Also exhibits THF-independent aldolase activity toward beta-hydroxyamino acids, producing glycine and aldehydes, via a retro-aldol mechanism.</text>
</comment>
<comment type="catalytic activity">
    <reaction evidence="1">
        <text>(6R)-5,10-methylene-5,6,7,8-tetrahydrofolate + glycine + H2O = (6S)-5,6,7,8-tetrahydrofolate + L-serine</text>
        <dbReference type="Rhea" id="RHEA:15481"/>
        <dbReference type="ChEBI" id="CHEBI:15377"/>
        <dbReference type="ChEBI" id="CHEBI:15636"/>
        <dbReference type="ChEBI" id="CHEBI:33384"/>
        <dbReference type="ChEBI" id="CHEBI:57305"/>
        <dbReference type="ChEBI" id="CHEBI:57453"/>
        <dbReference type="EC" id="2.1.2.1"/>
    </reaction>
</comment>
<comment type="cofactor">
    <cofactor evidence="1">
        <name>pyridoxal 5'-phosphate</name>
        <dbReference type="ChEBI" id="CHEBI:597326"/>
    </cofactor>
</comment>
<comment type="pathway">
    <text evidence="1">One-carbon metabolism; tetrahydrofolate interconversion.</text>
</comment>
<comment type="pathway">
    <text evidence="1">Amino-acid biosynthesis; glycine biosynthesis; glycine from L-serine: step 1/1.</text>
</comment>
<comment type="subunit">
    <text evidence="1">Homodimer.</text>
</comment>
<comment type="subcellular location">
    <subcellularLocation>
        <location evidence="1">Cytoplasm</location>
    </subcellularLocation>
</comment>
<comment type="similarity">
    <text evidence="1">Belongs to the SHMT family.</text>
</comment>
<accession>Q8Z2Z9</accession>
<name>GLYA2_SALTI</name>
<keyword id="KW-0028">Amino-acid biosynthesis</keyword>
<keyword id="KW-0963">Cytoplasm</keyword>
<keyword id="KW-0554">One-carbon metabolism</keyword>
<keyword id="KW-0663">Pyridoxal phosphate</keyword>
<keyword id="KW-0808">Transferase</keyword>